<accession>G1AS73</accession>
<name>O267_CONVC</name>
<evidence type="ECO:0000250" key="1"/>
<evidence type="ECO:0000255" key="2"/>
<evidence type="ECO:0000269" key="3">
    <source>
    </source>
</evidence>
<evidence type="ECO:0000305" key="4"/>
<organism>
    <name type="scientific">Conus victoriae</name>
    <name type="common">Queen Victoria cone</name>
    <dbReference type="NCBI Taxonomy" id="319920"/>
    <lineage>
        <taxon>Eukaryota</taxon>
        <taxon>Metazoa</taxon>
        <taxon>Spiralia</taxon>
        <taxon>Lophotrochozoa</taxon>
        <taxon>Mollusca</taxon>
        <taxon>Gastropoda</taxon>
        <taxon>Caenogastropoda</taxon>
        <taxon>Neogastropoda</taxon>
        <taxon>Conoidea</taxon>
        <taxon>Conidae</taxon>
        <taxon>Conus</taxon>
        <taxon>Cylinder</taxon>
    </lineage>
</organism>
<reference key="1">
    <citation type="journal article" date="2011" name="J. Biol. Chem.">
        <title>Embryonic toxin expression in the cone snail Conus victoriae: primed to kill or divergent function?</title>
        <authorList>
            <person name="Safavi-Hemami H."/>
            <person name="Siero W.A."/>
            <person name="Kuang Z."/>
            <person name="Williamson N.A."/>
            <person name="Karas J.A."/>
            <person name="Page L.R."/>
            <person name="Macmillan D."/>
            <person name="Callaghan B."/>
            <person name="Kompella S.N."/>
            <person name="Adams D.J."/>
            <person name="Norton R.S."/>
            <person name="Purcell A.W."/>
        </authorList>
    </citation>
    <scope>NUCLEOTIDE SEQUENCE [MRNA]</scope>
    <scope>DEVELOPMENTAL STAGE</scope>
    <source>
        <tissue>Embryo</tissue>
        <tissue>Venom duct</tissue>
    </source>
</reference>
<proteinExistence type="evidence at transcript level"/>
<keyword id="KW-1015">Disulfide bond</keyword>
<keyword id="KW-0872">Ion channel impairing toxin</keyword>
<keyword id="KW-0960">Knottin</keyword>
<keyword id="KW-0964">Secreted</keyword>
<keyword id="KW-0732">Signal</keyword>
<keyword id="KW-0800">Toxin</keyword>
<dbReference type="EMBL" id="JF433900">
    <property type="protein sequence ID" value="AEA35356.1"/>
    <property type="molecule type" value="mRNA"/>
</dbReference>
<dbReference type="ConoServer" id="4268">
    <property type="toxin name" value="Vc6.7 precursor"/>
</dbReference>
<dbReference type="GO" id="GO:0005576">
    <property type="term" value="C:extracellular region"/>
    <property type="evidence" value="ECO:0007669"/>
    <property type="project" value="UniProtKB-SubCell"/>
</dbReference>
<dbReference type="GO" id="GO:0008200">
    <property type="term" value="F:ion channel inhibitor activity"/>
    <property type="evidence" value="ECO:0007669"/>
    <property type="project" value="InterPro"/>
</dbReference>
<dbReference type="GO" id="GO:0090729">
    <property type="term" value="F:toxin activity"/>
    <property type="evidence" value="ECO:0007669"/>
    <property type="project" value="UniProtKB-KW"/>
</dbReference>
<dbReference type="InterPro" id="IPR004214">
    <property type="entry name" value="Conotoxin"/>
</dbReference>
<dbReference type="Pfam" id="PF02950">
    <property type="entry name" value="Conotoxin"/>
    <property type="match status" value="1"/>
</dbReference>
<protein>
    <recommendedName>
        <fullName>Conotoxin Vc6.7</fullName>
    </recommendedName>
</protein>
<comment type="function">
    <text evidence="1">Inhibits voltage-gated ion channels.</text>
</comment>
<comment type="subcellular location">
    <subcellularLocation>
        <location evidence="1">Secreted</location>
    </subcellularLocation>
</comment>
<comment type="tissue specificity">
    <text>Expressed by the venom duct.</text>
</comment>
<comment type="developmental stage">
    <text evidence="3">Only expressed in adults.</text>
</comment>
<comment type="domain">
    <text evidence="1">The presence of a 'disulfide through disulfide knot' structurally defines this protein as a knottin.</text>
</comment>
<comment type="domain">
    <text>The cysteine framework is VI/VII (C-C-CC-C-C).</text>
</comment>
<comment type="similarity">
    <text evidence="4">Belongs to the conotoxin O2 superfamily.</text>
</comment>
<feature type="signal peptide" evidence="2">
    <location>
        <begin position="1"/>
        <end position="19"/>
    </location>
</feature>
<feature type="propeptide" id="PRO_0000425163" evidence="1">
    <location>
        <begin position="20"/>
        <end position="44"/>
    </location>
</feature>
<feature type="peptide" id="PRO_0000425164" description="Conotoxin Vc6.7">
    <location>
        <begin position="46"/>
        <end position="81"/>
    </location>
</feature>
<feature type="disulfide bond" evidence="1">
    <location>
        <begin position="49"/>
        <end position="63"/>
    </location>
</feature>
<feature type="disulfide bond" evidence="1">
    <location>
        <begin position="56"/>
        <end position="67"/>
    </location>
</feature>
<feature type="disulfide bond" evidence="1">
    <location>
        <begin position="62"/>
        <end position="72"/>
    </location>
</feature>
<sequence length="81" mass="9372">MEKLTILLLVAAVLMSIQAVNQEKHQRAKMNLLSKRKPPAERWWRWGGCMAWFGLCSKDSECCSNSCDVTRCELMPFPPDW</sequence>